<organism>
    <name type="scientific">Colletotrichum orbiculare (strain 104-T / ATCC 96160 / CBS 514.97 / LARS 414 / MAFF 240422)</name>
    <name type="common">Cucumber anthracnose fungus</name>
    <name type="synonym">Colletotrichum lagenarium</name>
    <dbReference type="NCBI Taxonomy" id="1213857"/>
    <lineage>
        <taxon>Eukaryota</taxon>
        <taxon>Fungi</taxon>
        <taxon>Dikarya</taxon>
        <taxon>Ascomycota</taxon>
        <taxon>Pezizomycotina</taxon>
        <taxon>Sordariomycetes</taxon>
        <taxon>Hypocreomycetidae</taxon>
        <taxon>Glomerellales</taxon>
        <taxon>Glomerellaceae</taxon>
        <taxon>Colletotrichum</taxon>
        <taxon>Colletotrichum orbiculare species complex</taxon>
    </lineage>
</organism>
<keyword id="KW-1015">Disulfide bond</keyword>
<keyword id="KW-0964">Secreted</keyword>
<keyword id="KW-0732">Signal</keyword>
<keyword id="KW-0843">Virulence</keyword>
<accession>H7CE70</accession>
<accession>N4UPH1</accession>
<reference key="1">
    <citation type="journal article" date="2012" name="PLoS Pathog.">
        <title>Large-scale gene disruption in Magnaporthe oryzae identifies MC69, a secreted protein required for infection by monocot and dicot fungal pathogens.</title>
        <authorList>
            <person name="Saitoh H."/>
            <person name="Fujisawa S."/>
            <person name="Mitsuoka C."/>
            <person name="Ito A."/>
            <person name="Hirabuchi A."/>
            <person name="Ikeda K."/>
            <person name="Irieda H."/>
            <person name="Yoshino K."/>
            <person name="Yoshida K."/>
            <person name="Matsumura H."/>
            <person name="Tosa Y."/>
            <person name="Win J."/>
            <person name="Kamoun S."/>
            <person name="Takano Y."/>
            <person name="Terauchi R."/>
        </authorList>
    </citation>
    <scope>NUCLEOTIDE SEQUENCE [GENOMIC DNA]</scope>
    <scope>FUNCTION</scope>
    <scope>DISRUPTION PHENOTYPE</scope>
    <scope>INDUCTION</scope>
    <source>
        <strain>104-T / ATCC 96160 / CBS 514.97 / LARS 414 / MAFF 240422</strain>
    </source>
</reference>
<reference key="2">
    <citation type="journal article" date="2013" name="New Phytol.">
        <title>Comparative genomic and transcriptomic analyses reveal the hemibiotrophic stage shift of Colletotrichum fungi.</title>
        <authorList>
            <person name="Gan P."/>
            <person name="Ikeda K."/>
            <person name="Irieda H."/>
            <person name="Narusaka M."/>
            <person name="O'Connell R.J."/>
            <person name="Narusaka Y."/>
            <person name="Takano Y."/>
            <person name="Kubo Y."/>
            <person name="Shirasu K."/>
        </authorList>
    </citation>
    <scope>NUCLEOTIDE SEQUENCE [LARGE SCALE GENOMIC DNA]</scope>
    <source>
        <strain>104-T / ATCC 96160 / CBS 514.97 / LARS 414 / MAFF 240422</strain>
    </source>
</reference>
<reference key="3">
    <citation type="journal article" date="2014" name="Plant Cell">
        <title>Colletotrichum orbiculare secretes virulence effectors to a biotrophic interface at the primary hyphal neck via exocytosis coupled with SEC22-mediated traffic.</title>
        <authorList>
            <person name="Irieda H."/>
            <person name="Maeda H."/>
            <person name="Akiyama K."/>
            <person name="Hagiwara A."/>
            <person name="Saitoh H."/>
            <person name="Uemura A."/>
            <person name="Terauchi R."/>
            <person name="Takano Y."/>
        </authorList>
    </citation>
    <scope>FUNCTION</scope>
    <scope>DISRUPTION PHENOTYPE</scope>
    <scope>SUBCELLULAR LOCATION</scope>
</reference>
<evidence type="ECO:0000250" key="1">
    <source>
        <dbReference type="UniProtKB" id="G5EI17"/>
    </source>
</evidence>
<evidence type="ECO:0000255" key="2"/>
<evidence type="ECO:0000269" key="3">
    <source>
    </source>
</evidence>
<evidence type="ECO:0000269" key="4">
    <source>
    </source>
</evidence>
<evidence type="ECO:0000303" key="5">
    <source>
    </source>
</evidence>
<evidence type="ECO:0000305" key="6"/>
<feature type="signal peptide" evidence="2">
    <location>
        <begin position="1"/>
        <end position="18"/>
    </location>
</feature>
<feature type="chain" id="PRO_5003608307" description="Secreted virulence factor MC69">
    <location>
        <begin position="19"/>
        <end position="54"/>
    </location>
</feature>
<feature type="disulfide bond" evidence="1">
    <location>
        <begin position="38"/>
        <end position="48"/>
    </location>
</feature>
<proteinExistence type="evidence at transcript level"/>
<comment type="function">
    <text evidence="3 4">Secreted protein required for appressorial penetration of intact host epidermal cells and for pathogenicity.</text>
</comment>
<comment type="subcellular location">
    <subcellularLocation>
        <location evidence="4">Secreted</location>
    </subcellularLocation>
    <text evidence="4">Secreted exocytosis coupled with SEC22-mediated traffic and accumulates in a ring-like region around the neck of the biotrophic primary hyphae.</text>
</comment>
<comment type="induction">
    <text evidence="3">Expressed in the plant infection stage.</text>
</comment>
<comment type="disruption phenotype">
    <text evidence="3 4">Impairs pathogenicity (PubMed:22589729, PubMed:24850852). Leads to clear reduction in lesion development on cucumber leaves (PubMed:22589729).</text>
</comment>
<comment type="similarity">
    <text evidence="6">Belongs to the MC69 virulence factor family.</text>
</comment>
<comment type="sequence caution" evidence="6">
    <conflict type="erroneous gene model prediction">
        <sequence resource="EMBL-CDS" id="ENH77638"/>
    </conflict>
</comment>
<dbReference type="EMBL" id="AB669186">
    <property type="protein sequence ID" value="BAL70272.1"/>
    <property type="molecule type" value="Genomic_DNA"/>
</dbReference>
<dbReference type="EMBL" id="KB726077">
    <property type="protein sequence ID" value="ENH77638.1"/>
    <property type="status" value="ALT_SEQ"/>
    <property type="molecule type" value="Genomic_DNA"/>
</dbReference>
<dbReference type="eggNOG" id="ENOG502SV3A">
    <property type="taxonomic scope" value="Eukaryota"/>
</dbReference>
<dbReference type="HOGENOM" id="CLU_1835044_0_0_1"/>
<dbReference type="PHI-base" id="PHI:3123"/>
<dbReference type="GO" id="GO:0005576">
    <property type="term" value="C:extracellular region"/>
    <property type="evidence" value="ECO:0007669"/>
    <property type="project" value="UniProtKB-SubCell"/>
</dbReference>
<sequence length="54" mass="5563">MKFTLALLTTLCASLASAGVVITPVRPNQVIPANSGDCFFGVVTPQGCAPLRKS</sequence>
<gene>
    <name evidence="5" type="primary">MC69</name>
    <name type="ORF">Cob_13056</name>
</gene>
<name>MC69_COLOR</name>
<protein>
    <recommendedName>
        <fullName evidence="5">Secreted virulence factor MC69</fullName>
    </recommendedName>
</protein>